<reference key="1">
    <citation type="journal article" date="2000" name="Science">
        <title>The genome sequence of Drosophila melanogaster.</title>
        <authorList>
            <person name="Adams M.D."/>
            <person name="Celniker S.E."/>
            <person name="Holt R.A."/>
            <person name="Evans C.A."/>
            <person name="Gocayne J.D."/>
            <person name="Amanatides P.G."/>
            <person name="Scherer S.E."/>
            <person name="Li P.W."/>
            <person name="Hoskins R.A."/>
            <person name="Galle R.F."/>
            <person name="George R.A."/>
            <person name="Lewis S.E."/>
            <person name="Richards S."/>
            <person name="Ashburner M."/>
            <person name="Henderson S.N."/>
            <person name="Sutton G.G."/>
            <person name="Wortman J.R."/>
            <person name="Yandell M.D."/>
            <person name="Zhang Q."/>
            <person name="Chen L.X."/>
            <person name="Brandon R.C."/>
            <person name="Rogers Y.-H.C."/>
            <person name="Blazej R.G."/>
            <person name="Champe M."/>
            <person name="Pfeiffer B.D."/>
            <person name="Wan K.H."/>
            <person name="Doyle C."/>
            <person name="Baxter E.G."/>
            <person name="Helt G."/>
            <person name="Nelson C.R."/>
            <person name="Miklos G.L.G."/>
            <person name="Abril J.F."/>
            <person name="Agbayani A."/>
            <person name="An H.-J."/>
            <person name="Andrews-Pfannkoch C."/>
            <person name="Baldwin D."/>
            <person name="Ballew R.M."/>
            <person name="Basu A."/>
            <person name="Baxendale J."/>
            <person name="Bayraktaroglu L."/>
            <person name="Beasley E.M."/>
            <person name="Beeson K.Y."/>
            <person name="Benos P.V."/>
            <person name="Berman B.P."/>
            <person name="Bhandari D."/>
            <person name="Bolshakov S."/>
            <person name="Borkova D."/>
            <person name="Botchan M.R."/>
            <person name="Bouck J."/>
            <person name="Brokstein P."/>
            <person name="Brottier P."/>
            <person name="Burtis K.C."/>
            <person name="Busam D.A."/>
            <person name="Butler H."/>
            <person name="Cadieu E."/>
            <person name="Center A."/>
            <person name="Chandra I."/>
            <person name="Cherry J.M."/>
            <person name="Cawley S."/>
            <person name="Dahlke C."/>
            <person name="Davenport L.B."/>
            <person name="Davies P."/>
            <person name="de Pablos B."/>
            <person name="Delcher A."/>
            <person name="Deng Z."/>
            <person name="Mays A.D."/>
            <person name="Dew I."/>
            <person name="Dietz S.M."/>
            <person name="Dodson K."/>
            <person name="Doup L.E."/>
            <person name="Downes M."/>
            <person name="Dugan-Rocha S."/>
            <person name="Dunkov B.C."/>
            <person name="Dunn P."/>
            <person name="Durbin K.J."/>
            <person name="Evangelista C.C."/>
            <person name="Ferraz C."/>
            <person name="Ferriera S."/>
            <person name="Fleischmann W."/>
            <person name="Fosler C."/>
            <person name="Gabrielian A.E."/>
            <person name="Garg N.S."/>
            <person name="Gelbart W.M."/>
            <person name="Glasser K."/>
            <person name="Glodek A."/>
            <person name="Gong F."/>
            <person name="Gorrell J.H."/>
            <person name="Gu Z."/>
            <person name="Guan P."/>
            <person name="Harris M."/>
            <person name="Harris N.L."/>
            <person name="Harvey D.A."/>
            <person name="Heiman T.J."/>
            <person name="Hernandez J.R."/>
            <person name="Houck J."/>
            <person name="Hostin D."/>
            <person name="Houston K.A."/>
            <person name="Howland T.J."/>
            <person name="Wei M.-H."/>
            <person name="Ibegwam C."/>
            <person name="Jalali M."/>
            <person name="Kalush F."/>
            <person name="Karpen G.H."/>
            <person name="Ke Z."/>
            <person name="Kennison J.A."/>
            <person name="Ketchum K.A."/>
            <person name="Kimmel B.E."/>
            <person name="Kodira C.D."/>
            <person name="Kraft C.L."/>
            <person name="Kravitz S."/>
            <person name="Kulp D."/>
            <person name="Lai Z."/>
            <person name="Lasko P."/>
            <person name="Lei Y."/>
            <person name="Levitsky A.A."/>
            <person name="Li J.H."/>
            <person name="Li Z."/>
            <person name="Liang Y."/>
            <person name="Lin X."/>
            <person name="Liu X."/>
            <person name="Mattei B."/>
            <person name="McIntosh T.C."/>
            <person name="McLeod M.P."/>
            <person name="McPherson D."/>
            <person name="Merkulov G."/>
            <person name="Milshina N.V."/>
            <person name="Mobarry C."/>
            <person name="Morris J."/>
            <person name="Moshrefi A."/>
            <person name="Mount S.M."/>
            <person name="Moy M."/>
            <person name="Murphy B."/>
            <person name="Murphy L."/>
            <person name="Muzny D.M."/>
            <person name="Nelson D.L."/>
            <person name="Nelson D.R."/>
            <person name="Nelson K.A."/>
            <person name="Nixon K."/>
            <person name="Nusskern D.R."/>
            <person name="Pacleb J.M."/>
            <person name="Palazzolo M."/>
            <person name="Pittman G.S."/>
            <person name="Pan S."/>
            <person name="Pollard J."/>
            <person name="Puri V."/>
            <person name="Reese M.G."/>
            <person name="Reinert K."/>
            <person name="Remington K."/>
            <person name="Saunders R.D.C."/>
            <person name="Scheeler F."/>
            <person name="Shen H."/>
            <person name="Shue B.C."/>
            <person name="Siden-Kiamos I."/>
            <person name="Simpson M."/>
            <person name="Skupski M.P."/>
            <person name="Smith T.J."/>
            <person name="Spier E."/>
            <person name="Spradling A.C."/>
            <person name="Stapleton M."/>
            <person name="Strong R."/>
            <person name="Sun E."/>
            <person name="Svirskas R."/>
            <person name="Tector C."/>
            <person name="Turner R."/>
            <person name="Venter E."/>
            <person name="Wang A.H."/>
            <person name="Wang X."/>
            <person name="Wang Z.-Y."/>
            <person name="Wassarman D.A."/>
            <person name="Weinstock G.M."/>
            <person name="Weissenbach J."/>
            <person name="Williams S.M."/>
            <person name="Woodage T."/>
            <person name="Worley K.C."/>
            <person name="Wu D."/>
            <person name="Yang S."/>
            <person name="Yao Q.A."/>
            <person name="Ye J."/>
            <person name="Yeh R.-F."/>
            <person name="Zaveri J.S."/>
            <person name="Zhan M."/>
            <person name="Zhang G."/>
            <person name="Zhao Q."/>
            <person name="Zheng L."/>
            <person name="Zheng X.H."/>
            <person name="Zhong F.N."/>
            <person name="Zhong W."/>
            <person name="Zhou X."/>
            <person name="Zhu S.C."/>
            <person name="Zhu X."/>
            <person name="Smith H.O."/>
            <person name="Gibbs R.A."/>
            <person name="Myers E.W."/>
            <person name="Rubin G.M."/>
            <person name="Venter J.C."/>
        </authorList>
    </citation>
    <scope>NUCLEOTIDE SEQUENCE [LARGE SCALE GENOMIC DNA]</scope>
    <source>
        <strain>Berkeley</strain>
    </source>
</reference>
<reference key="2">
    <citation type="journal article" date="2002" name="Genome Biol.">
        <title>Annotation of the Drosophila melanogaster euchromatic genome: a systematic review.</title>
        <authorList>
            <person name="Misra S."/>
            <person name="Crosby M.A."/>
            <person name="Mungall C.J."/>
            <person name="Matthews B.B."/>
            <person name="Campbell K.S."/>
            <person name="Hradecky P."/>
            <person name="Huang Y."/>
            <person name="Kaminker J.S."/>
            <person name="Millburn G.H."/>
            <person name="Prochnik S.E."/>
            <person name="Smith C.D."/>
            <person name="Tupy J.L."/>
            <person name="Whitfield E.J."/>
            <person name="Bayraktaroglu L."/>
            <person name="Berman B.P."/>
            <person name="Bettencourt B.R."/>
            <person name="Celniker S.E."/>
            <person name="de Grey A.D.N.J."/>
            <person name="Drysdale R.A."/>
            <person name="Harris N.L."/>
            <person name="Richter J."/>
            <person name="Russo S."/>
            <person name="Schroeder A.J."/>
            <person name="Shu S.Q."/>
            <person name="Stapleton M."/>
            <person name="Yamada C."/>
            <person name="Ashburner M."/>
            <person name="Gelbart W.M."/>
            <person name="Rubin G.M."/>
            <person name="Lewis S.E."/>
        </authorList>
    </citation>
    <scope>GENOME REANNOTATION</scope>
    <source>
        <strain>Berkeley</strain>
    </source>
</reference>
<reference key="3">
    <citation type="journal article" date="2002" name="Genome Biol.">
        <title>A Drosophila full-length cDNA resource.</title>
        <authorList>
            <person name="Stapleton M."/>
            <person name="Carlson J.W."/>
            <person name="Brokstein P."/>
            <person name="Yu C."/>
            <person name="Champe M."/>
            <person name="George R.A."/>
            <person name="Guarin H."/>
            <person name="Kronmiller B."/>
            <person name="Pacleb J.M."/>
            <person name="Park S."/>
            <person name="Wan K.H."/>
            <person name="Rubin G.M."/>
            <person name="Celniker S.E."/>
        </authorList>
    </citation>
    <scope>NUCLEOTIDE SEQUENCE [LARGE SCALE MRNA]</scope>
    <source>
        <strain>Berkeley</strain>
        <tissue>Head</tissue>
    </source>
</reference>
<keyword id="KW-0186">Copper</keyword>
<keyword id="KW-1185">Reference proteome</keyword>
<proteinExistence type="evidence at transcript level"/>
<dbReference type="EMBL" id="AE014297">
    <property type="protein sequence ID" value="AAF55189.1"/>
    <property type="molecule type" value="Genomic_DNA"/>
</dbReference>
<dbReference type="EMBL" id="AY070500">
    <property type="protein sequence ID" value="AAL47971.1"/>
    <property type="molecule type" value="mRNA"/>
</dbReference>
<dbReference type="EMBL" id="AY119472">
    <property type="protein sequence ID" value="AAM50126.1"/>
    <property type="molecule type" value="mRNA"/>
</dbReference>
<dbReference type="RefSeq" id="NP_001189224.1">
    <property type="nucleotide sequence ID" value="NM_001202295.2"/>
</dbReference>
<dbReference type="RefSeq" id="NP_001262600.1">
    <property type="nucleotide sequence ID" value="NM_001275671.1"/>
</dbReference>
<dbReference type="RefSeq" id="NP_650460.1">
    <property type="nucleotide sequence ID" value="NM_142203.4"/>
</dbReference>
<dbReference type="SMR" id="Q9VF71"/>
<dbReference type="BioGRID" id="66940">
    <property type="interactions" value="1"/>
</dbReference>
<dbReference type="FunCoup" id="Q9VF71">
    <property type="interactions" value="7"/>
</dbReference>
<dbReference type="STRING" id="7227.FBpp0292328"/>
<dbReference type="PaxDb" id="7227-FBpp0292328"/>
<dbReference type="DNASU" id="41877"/>
<dbReference type="EnsemblMetazoa" id="FBtr0303235">
    <property type="protein sequence ID" value="FBpp0292327"/>
    <property type="gene ID" value="FBgn0038332"/>
</dbReference>
<dbReference type="EnsemblMetazoa" id="FBtr0303236">
    <property type="protein sequence ID" value="FBpp0292328"/>
    <property type="gene ID" value="FBgn0038332"/>
</dbReference>
<dbReference type="EnsemblMetazoa" id="FBtr0332540">
    <property type="protein sequence ID" value="FBpp0304807"/>
    <property type="gene ID" value="FBgn0038332"/>
</dbReference>
<dbReference type="GeneID" id="41877"/>
<dbReference type="KEGG" id="dme:Dmel_CG6136"/>
<dbReference type="UCSC" id="CG6136-RA">
    <property type="organism name" value="d. melanogaster"/>
</dbReference>
<dbReference type="AGR" id="FB:FBgn0038332"/>
<dbReference type="FlyBase" id="FBgn0038332">
    <property type="gene designation" value="CG6136"/>
</dbReference>
<dbReference type="VEuPathDB" id="VectorBase:FBgn0038332"/>
<dbReference type="eggNOG" id="KOG4013">
    <property type="taxonomic scope" value="Eukaryota"/>
</dbReference>
<dbReference type="GeneTree" id="ENSGT00390000008454"/>
<dbReference type="HOGENOM" id="CLU_050555_3_2_1"/>
<dbReference type="InParanoid" id="Q9VF71"/>
<dbReference type="OMA" id="HRAFDQC"/>
<dbReference type="OrthoDB" id="7392499at2759"/>
<dbReference type="PhylomeDB" id="Q9VF71"/>
<dbReference type="BioGRID-ORCS" id="41877">
    <property type="hits" value="0 hits in 1 CRISPR screen"/>
</dbReference>
<dbReference type="GenomeRNAi" id="41877"/>
<dbReference type="PRO" id="PR:Q9VF71"/>
<dbReference type="Proteomes" id="UP000000803">
    <property type="component" value="Chromosome 3R"/>
</dbReference>
<dbReference type="Bgee" id="FBgn0038332">
    <property type="expression patterns" value="Expressed in mid-late elongation-stage spermatid (Drosophila) in testis and 50 other cell types or tissues"/>
</dbReference>
<dbReference type="ExpressionAtlas" id="Q9VF71">
    <property type="expression patterns" value="baseline and differential"/>
</dbReference>
<dbReference type="GO" id="GO:0005507">
    <property type="term" value="F:copper ion binding"/>
    <property type="evidence" value="ECO:0000318"/>
    <property type="project" value="GO_Central"/>
</dbReference>
<dbReference type="FunFam" id="3.20.20.380:FF:000005">
    <property type="entry name" value="Uncharacterized protein, isoform B"/>
    <property type="match status" value="1"/>
</dbReference>
<dbReference type="Gene3D" id="3.20.20.380">
    <property type="entry name" value="Copper homeostasis (CutC) domain"/>
    <property type="match status" value="1"/>
</dbReference>
<dbReference type="HAMAP" id="MF_00795">
    <property type="entry name" value="CutC"/>
    <property type="match status" value="1"/>
</dbReference>
<dbReference type="InterPro" id="IPR005627">
    <property type="entry name" value="CutC-like"/>
</dbReference>
<dbReference type="InterPro" id="IPR036822">
    <property type="entry name" value="CutC-like_dom_sf"/>
</dbReference>
<dbReference type="PANTHER" id="PTHR12598">
    <property type="entry name" value="COPPER HOMEOSTASIS PROTEIN CUTC"/>
    <property type="match status" value="1"/>
</dbReference>
<dbReference type="PANTHER" id="PTHR12598:SF0">
    <property type="entry name" value="COPPER HOMEOSTASIS PROTEIN CUTC HOMOLOG"/>
    <property type="match status" value="1"/>
</dbReference>
<dbReference type="Pfam" id="PF03932">
    <property type="entry name" value="CutC"/>
    <property type="match status" value="1"/>
</dbReference>
<dbReference type="SUPFAM" id="SSF110395">
    <property type="entry name" value="CutC-like"/>
    <property type="match status" value="1"/>
</dbReference>
<feature type="chain" id="PRO_0000215091" description="Copper homeostasis protein cutC homolog">
    <location>
        <begin position="1"/>
        <end position="263"/>
    </location>
</feature>
<sequence length="263" mass="28916">MIREMSNHDIKLEVCVDSIRSAFAAEEGGASRIELCSALGEGGLTPSIGTLKTIKETLTMPIYCMLRPRRGTDFVYSDEEMCALLTDMDLLRENGADGFVFGSLNPDRSINVDQCRHVLLASGGLPVTFHRAFDLTDQKSMDENVDMLRELGFRRLLSSGFRPTAADGVDCLAQLIAKHQRDFIVMPGAGIKVSNLEEILTVSRCLEFHASALDTAGEDYVAPTTTRMECDVTMGKQDVDPYYGTNSIVVRKMVTIAKAMSSR</sequence>
<evidence type="ECO:0000250" key="1"/>
<evidence type="ECO:0000305" key="2"/>
<accession>Q9VF71</accession>
<comment type="function">
    <text evidence="1">Involved in copper homeostasis.</text>
</comment>
<comment type="similarity">
    <text evidence="2">Belongs to the CutC family.</text>
</comment>
<name>CUTC_DROME</name>
<organism>
    <name type="scientific">Drosophila melanogaster</name>
    <name type="common">Fruit fly</name>
    <dbReference type="NCBI Taxonomy" id="7227"/>
    <lineage>
        <taxon>Eukaryota</taxon>
        <taxon>Metazoa</taxon>
        <taxon>Ecdysozoa</taxon>
        <taxon>Arthropoda</taxon>
        <taxon>Hexapoda</taxon>
        <taxon>Insecta</taxon>
        <taxon>Pterygota</taxon>
        <taxon>Neoptera</taxon>
        <taxon>Endopterygota</taxon>
        <taxon>Diptera</taxon>
        <taxon>Brachycera</taxon>
        <taxon>Muscomorpha</taxon>
        <taxon>Ephydroidea</taxon>
        <taxon>Drosophilidae</taxon>
        <taxon>Drosophila</taxon>
        <taxon>Sophophora</taxon>
    </lineage>
</organism>
<gene>
    <name type="ORF">CG6136</name>
</gene>
<protein>
    <recommendedName>
        <fullName>Copper homeostasis protein cutC homolog</fullName>
    </recommendedName>
</protein>